<feature type="chain" id="PRO_0000148497" description="Dihydroorotate dehydrogenase (quinone)">
    <location>
        <begin position="1"/>
        <end position="349"/>
    </location>
</feature>
<feature type="region of interest" description="Disordered" evidence="2">
    <location>
        <begin position="244"/>
        <end position="265"/>
    </location>
</feature>
<feature type="compositionally biased region" description="Basic and acidic residues" evidence="2">
    <location>
        <begin position="245"/>
        <end position="255"/>
    </location>
</feature>
<feature type="active site" description="Nucleophile" evidence="1">
    <location>
        <position position="179"/>
    </location>
</feature>
<feature type="binding site" evidence="1">
    <location>
        <begin position="65"/>
        <end position="69"/>
    </location>
    <ligand>
        <name>FMN</name>
        <dbReference type="ChEBI" id="CHEBI:58210"/>
    </ligand>
</feature>
<feature type="binding site" evidence="1">
    <location>
        <position position="69"/>
    </location>
    <ligand>
        <name>substrate</name>
    </ligand>
</feature>
<feature type="binding site" evidence="1">
    <location>
        <position position="89"/>
    </location>
    <ligand>
        <name>FMN</name>
        <dbReference type="ChEBI" id="CHEBI:58210"/>
    </ligand>
</feature>
<feature type="binding site" evidence="1">
    <location>
        <begin position="114"/>
        <end position="118"/>
    </location>
    <ligand>
        <name>substrate</name>
    </ligand>
</feature>
<feature type="binding site" evidence="1">
    <location>
        <position position="143"/>
    </location>
    <ligand>
        <name>FMN</name>
        <dbReference type="ChEBI" id="CHEBI:58210"/>
    </ligand>
</feature>
<feature type="binding site" evidence="1">
    <location>
        <position position="176"/>
    </location>
    <ligand>
        <name>FMN</name>
        <dbReference type="ChEBI" id="CHEBI:58210"/>
    </ligand>
</feature>
<feature type="binding site" evidence="1">
    <location>
        <position position="176"/>
    </location>
    <ligand>
        <name>substrate</name>
    </ligand>
</feature>
<feature type="binding site" evidence="1">
    <location>
        <position position="181"/>
    </location>
    <ligand>
        <name>substrate</name>
    </ligand>
</feature>
<feature type="binding site" evidence="1">
    <location>
        <position position="212"/>
    </location>
    <ligand>
        <name>FMN</name>
        <dbReference type="ChEBI" id="CHEBI:58210"/>
    </ligand>
</feature>
<feature type="binding site" evidence="1">
    <location>
        <position position="240"/>
    </location>
    <ligand>
        <name>FMN</name>
        <dbReference type="ChEBI" id="CHEBI:58210"/>
    </ligand>
</feature>
<feature type="binding site" evidence="1">
    <location>
        <begin position="241"/>
        <end position="242"/>
    </location>
    <ligand>
        <name>substrate</name>
    </ligand>
</feature>
<feature type="binding site" evidence="1">
    <location>
        <position position="263"/>
    </location>
    <ligand>
        <name>FMN</name>
        <dbReference type="ChEBI" id="CHEBI:58210"/>
    </ligand>
</feature>
<feature type="binding site" evidence="1">
    <location>
        <position position="290"/>
    </location>
    <ligand>
        <name>FMN</name>
        <dbReference type="ChEBI" id="CHEBI:58210"/>
    </ligand>
</feature>
<feature type="binding site" evidence="1">
    <location>
        <begin position="311"/>
        <end position="312"/>
    </location>
    <ligand>
        <name>FMN</name>
        <dbReference type="ChEBI" id="CHEBI:58210"/>
    </ligand>
</feature>
<keyword id="KW-1003">Cell membrane</keyword>
<keyword id="KW-0285">Flavoprotein</keyword>
<keyword id="KW-0288">FMN</keyword>
<keyword id="KW-0472">Membrane</keyword>
<keyword id="KW-0560">Oxidoreductase</keyword>
<keyword id="KW-0665">Pyrimidine biosynthesis</keyword>
<keyword id="KW-1185">Reference proteome</keyword>
<comment type="function">
    <text evidence="1">Catalyzes the conversion of dihydroorotate to orotate with quinone as electron acceptor.</text>
</comment>
<comment type="catalytic activity">
    <reaction evidence="1">
        <text>(S)-dihydroorotate + a quinone = orotate + a quinol</text>
        <dbReference type="Rhea" id="RHEA:30187"/>
        <dbReference type="ChEBI" id="CHEBI:24646"/>
        <dbReference type="ChEBI" id="CHEBI:30839"/>
        <dbReference type="ChEBI" id="CHEBI:30864"/>
        <dbReference type="ChEBI" id="CHEBI:132124"/>
        <dbReference type="EC" id="1.3.5.2"/>
    </reaction>
</comment>
<comment type="cofactor">
    <cofactor evidence="1">
        <name>FMN</name>
        <dbReference type="ChEBI" id="CHEBI:58210"/>
    </cofactor>
    <text evidence="1">Binds 1 FMN per subunit.</text>
</comment>
<comment type="pathway">
    <text evidence="1">Pyrimidine metabolism; UMP biosynthesis via de novo pathway; orotate from (S)-dihydroorotate (quinone route): step 1/1.</text>
</comment>
<comment type="subunit">
    <text evidence="1">Monomer.</text>
</comment>
<comment type="subcellular location">
    <subcellularLocation>
        <location evidence="1">Cell membrane</location>
        <topology evidence="1">Peripheral membrane protein</topology>
    </subcellularLocation>
</comment>
<comment type="similarity">
    <text evidence="1">Belongs to the dihydroorotate dehydrogenase family. Type 2 subfamily.</text>
</comment>
<organism>
    <name type="scientific">Halobacterium salinarum (strain ATCC 700922 / JCM 11081 / NRC-1)</name>
    <name type="common">Halobacterium halobium</name>
    <dbReference type="NCBI Taxonomy" id="64091"/>
    <lineage>
        <taxon>Archaea</taxon>
        <taxon>Methanobacteriati</taxon>
        <taxon>Methanobacteriota</taxon>
        <taxon>Stenosarchaea group</taxon>
        <taxon>Halobacteria</taxon>
        <taxon>Halobacteriales</taxon>
        <taxon>Halobacteriaceae</taxon>
        <taxon>Halobacterium</taxon>
        <taxon>Halobacterium salinarum NRC-34001</taxon>
    </lineage>
</organism>
<gene>
    <name evidence="1" type="primary">pyrD</name>
    <name type="ordered locus">VNG_2507G</name>
</gene>
<proteinExistence type="inferred from homology"/>
<name>PYRD_HALSA</name>
<evidence type="ECO:0000255" key="1">
    <source>
        <dbReference type="HAMAP-Rule" id="MF_00225"/>
    </source>
</evidence>
<evidence type="ECO:0000256" key="2">
    <source>
        <dbReference type="SAM" id="MobiDB-lite"/>
    </source>
</evidence>
<protein>
    <recommendedName>
        <fullName evidence="1">Dihydroorotate dehydrogenase (quinone)</fullName>
        <ecNumber evidence="1">1.3.5.2</ecNumber>
    </recommendedName>
    <alternativeName>
        <fullName evidence="1">DHOdehase</fullName>
        <shortName evidence="1">DHOD</shortName>
        <shortName evidence="1">DHODase</shortName>
    </alternativeName>
    <alternativeName>
        <fullName evidence="1">Dihydroorotate oxidase</fullName>
    </alternativeName>
</protein>
<dbReference type="EC" id="1.3.5.2" evidence="1"/>
<dbReference type="EMBL" id="AE004437">
    <property type="protein sequence ID" value="AAG20569.1"/>
    <property type="molecule type" value="Genomic_DNA"/>
</dbReference>
<dbReference type="PIR" id="E84400">
    <property type="entry name" value="E84400"/>
</dbReference>
<dbReference type="RefSeq" id="WP_010903871.1">
    <property type="nucleotide sequence ID" value="NC_002607.1"/>
</dbReference>
<dbReference type="SMR" id="Q9HMK2"/>
<dbReference type="FunCoup" id="Q9HMK2">
    <property type="interactions" value="183"/>
</dbReference>
<dbReference type="STRING" id="64091.VNG_2507G"/>
<dbReference type="PaxDb" id="64091-VNG_2507G"/>
<dbReference type="KEGG" id="hal:VNG_2507G"/>
<dbReference type="PATRIC" id="fig|64091.14.peg.1941"/>
<dbReference type="HOGENOM" id="CLU_013640_2_0_2"/>
<dbReference type="InParanoid" id="Q9HMK2"/>
<dbReference type="OrthoDB" id="36608at2157"/>
<dbReference type="PhylomeDB" id="Q9HMK2"/>
<dbReference type="UniPathway" id="UPA00070">
    <property type="reaction ID" value="UER00946"/>
</dbReference>
<dbReference type="Proteomes" id="UP000000554">
    <property type="component" value="Chromosome"/>
</dbReference>
<dbReference type="GO" id="GO:0005737">
    <property type="term" value="C:cytoplasm"/>
    <property type="evidence" value="ECO:0007669"/>
    <property type="project" value="InterPro"/>
</dbReference>
<dbReference type="GO" id="GO:0005886">
    <property type="term" value="C:plasma membrane"/>
    <property type="evidence" value="ECO:0007669"/>
    <property type="project" value="UniProtKB-SubCell"/>
</dbReference>
<dbReference type="GO" id="GO:0106430">
    <property type="term" value="F:dihydroorotate dehydrogenase (quinone) activity"/>
    <property type="evidence" value="ECO:0007669"/>
    <property type="project" value="UniProtKB-EC"/>
</dbReference>
<dbReference type="GO" id="GO:0004152">
    <property type="term" value="F:dihydroorotate dehydrogenase activity"/>
    <property type="evidence" value="ECO:0000318"/>
    <property type="project" value="GO_Central"/>
</dbReference>
<dbReference type="GO" id="GO:0006207">
    <property type="term" value="P:'de novo' pyrimidine nucleobase biosynthetic process"/>
    <property type="evidence" value="ECO:0000318"/>
    <property type="project" value="GO_Central"/>
</dbReference>
<dbReference type="GO" id="GO:0044205">
    <property type="term" value="P:'de novo' UMP biosynthetic process"/>
    <property type="evidence" value="ECO:0007669"/>
    <property type="project" value="UniProtKB-UniRule"/>
</dbReference>
<dbReference type="GO" id="GO:0009220">
    <property type="term" value="P:pyrimidine ribonucleotide biosynthetic process"/>
    <property type="evidence" value="ECO:0000318"/>
    <property type="project" value="GO_Central"/>
</dbReference>
<dbReference type="CDD" id="cd04738">
    <property type="entry name" value="DHOD_2_like"/>
    <property type="match status" value="1"/>
</dbReference>
<dbReference type="FunFam" id="3.20.20.70:FF:000561">
    <property type="entry name" value="Dihydroorotate dehydrogenase (quinone)"/>
    <property type="match status" value="1"/>
</dbReference>
<dbReference type="Gene3D" id="3.20.20.70">
    <property type="entry name" value="Aldolase class I"/>
    <property type="match status" value="1"/>
</dbReference>
<dbReference type="HAMAP" id="MF_00225">
    <property type="entry name" value="DHO_dh_type2"/>
    <property type="match status" value="1"/>
</dbReference>
<dbReference type="InterPro" id="IPR013785">
    <property type="entry name" value="Aldolase_TIM"/>
</dbReference>
<dbReference type="InterPro" id="IPR050074">
    <property type="entry name" value="DHO_dehydrogenase"/>
</dbReference>
<dbReference type="InterPro" id="IPR012135">
    <property type="entry name" value="Dihydroorotate_DH_1_2"/>
</dbReference>
<dbReference type="InterPro" id="IPR005719">
    <property type="entry name" value="Dihydroorotate_DH_2"/>
</dbReference>
<dbReference type="InterPro" id="IPR005720">
    <property type="entry name" value="Dihydroorotate_DH_cat"/>
</dbReference>
<dbReference type="InterPro" id="IPR001295">
    <property type="entry name" value="Dihydroorotate_DH_CS"/>
</dbReference>
<dbReference type="NCBIfam" id="NF003645">
    <property type="entry name" value="PRK05286.1-2"/>
    <property type="match status" value="1"/>
</dbReference>
<dbReference type="NCBIfam" id="NF003652">
    <property type="entry name" value="PRK05286.2-5"/>
    <property type="match status" value="1"/>
</dbReference>
<dbReference type="NCBIfam" id="TIGR01036">
    <property type="entry name" value="pyrD_sub2"/>
    <property type="match status" value="1"/>
</dbReference>
<dbReference type="PANTHER" id="PTHR48109:SF4">
    <property type="entry name" value="DIHYDROOROTATE DEHYDROGENASE (QUINONE), MITOCHONDRIAL"/>
    <property type="match status" value="1"/>
</dbReference>
<dbReference type="PANTHER" id="PTHR48109">
    <property type="entry name" value="DIHYDROOROTATE DEHYDROGENASE (QUINONE), MITOCHONDRIAL-RELATED"/>
    <property type="match status" value="1"/>
</dbReference>
<dbReference type="Pfam" id="PF01180">
    <property type="entry name" value="DHO_dh"/>
    <property type="match status" value="1"/>
</dbReference>
<dbReference type="PIRSF" id="PIRSF000164">
    <property type="entry name" value="DHO_oxidase"/>
    <property type="match status" value="1"/>
</dbReference>
<dbReference type="SUPFAM" id="SSF51395">
    <property type="entry name" value="FMN-linked oxidoreductases"/>
    <property type="match status" value="1"/>
</dbReference>
<dbReference type="PROSITE" id="PS00911">
    <property type="entry name" value="DHODEHASE_1"/>
    <property type="match status" value="1"/>
</dbReference>
<dbReference type="PROSITE" id="PS00912">
    <property type="entry name" value="DHODEHASE_2"/>
    <property type="match status" value="1"/>
</dbReference>
<accession>Q9HMK2</accession>
<reference key="1">
    <citation type="journal article" date="2000" name="Proc. Natl. Acad. Sci. U.S.A.">
        <title>Genome sequence of Halobacterium species NRC-1.</title>
        <authorList>
            <person name="Ng W.V."/>
            <person name="Kennedy S.P."/>
            <person name="Mahairas G.G."/>
            <person name="Berquist B."/>
            <person name="Pan M."/>
            <person name="Shukla H.D."/>
            <person name="Lasky S.R."/>
            <person name="Baliga N.S."/>
            <person name="Thorsson V."/>
            <person name="Sbrogna J."/>
            <person name="Swartzell S."/>
            <person name="Weir D."/>
            <person name="Hall J."/>
            <person name="Dahl T.A."/>
            <person name="Welti R."/>
            <person name="Goo Y.A."/>
            <person name="Leithauser B."/>
            <person name="Keller K."/>
            <person name="Cruz R."/>
            <person name="Danson M.J."/>
            <person name="Hough D.W."/>
            <person name="Maddocks D.G."/>
            <person name="Jablonski P.E."/>
            <person name="Krebs M.P."/>
            <person name="Angevine C.M."/>
            <person name="Dale H."/>
            <person name="Isenbarger T.A."/>
            <person name="Peck R.F."/>
            <person name="Pohlschroder M."/>
            <person name="Spudich J.L."/>
            <person name="Jung K.-H."/>
            <person name="Alam M."/>
            <person name="Freitas T."/>
            <person name="Hou S."/>
            <person name="Daniels C.J."/>
            <person name="Dennis P.P."/>
            <person name="Omer A.D."/>
            <person name="Ebhardt H."/>
            <person name="Lowe T.M."/>
            <person name="Liang P."/>
            <person name="Riley M."/>
            <person name="Hood L."/>
            <person name="DasSarma S."/>
        </authorList>
    </citation>
    <scope>NUCLEOTIDE SEQUENCE [LARGE SCALE GENOMIC DNA]</scope>
    <source>
        <strain>ATCC 700922 / JCM 11081 / NRC-1</strain>
    </source>
</reference>
<sequence length="349" mass="36942">MYGLLKSALFGLPPETTHEITTSALRVAQRVGAHRAYAKQFTVTDPRLSVDAFGQTFPNPVGMAAGFDKNAEIPRALAGLGFGHIEVGAVTAERQPGNDRPRLFRLPDDNALVNRMGFNNEGADTVGARLDAEPLPDVPVGVNIGKSKTTPLADAPDDYTYTFSRVGDAVDYVVVNVSSPNTPGLRELQGRDQLAAILEALQDAGASPLLVKLSPDLHQDAVADAVELANDLGLDGIVATNTTTERPESLSHPHAGEQGGLSGAPIRERATEQVRFVAERTDQPVVGVGGVATAEDAYEKIRAGASVVQLYTALVYEGPWVAKRINEGLVSLLERDGFDSVEDAVGADL</sequence>